<sequence length="283" mass="30568">MMTHWPSPAKLNLFLYITGQRADGYHTLQTLFQFLDYGDTIGITPRGDGEIHLLTPVEGVENDDNLIVRAARLLMKTASAHGRLPAGSGADISIEKRLPMGGGLGGGSSNAATVLVALNHLWQCGLSVDELAETGLTLGADVPVFVRGHAAFAEGVGEILTPVDPPEKWYLVAHPGVSIPTPVIFKDPELPRNTPKRSIETLLKCEFGNDCEVIARKRFREVDAALSWLLEYAPSRLTGTGACVFAEFDTESAARQVLKQAPEWLNAFVAKGVNLSPLQKAML</sequence>
<gene>
    <name evidence="1" type="primary">ispE</name>
    <name type="ordered locus">CKO_01272</name>
</gene>
<accession>A8AFZ9</accession>
<keyword id="KW-0067">ATP-binding</keyword>
<keyword id="KW-0414">Isoprene biosynthesis</keyword>
<keyword id="KW-0418">Kinase</keyword>
<keyword id="KW-0547">Nucleotide-binding</keyword>
<keyword id="KW-1185">Reference proteome</keyword>
<keyword id="KW-0808">Transferase</keyword>
<name>ISPE_CITK8</name>
<proteinExistence type="inferred from homology"/>
<protein>
    <recommendedName>
        <fullName evidence="1">4-diphosphocytidyl-2-C-methyl-D-erythritol kinase</fullName>
        <shortName evidence="1">CMK</shortName>
        <ecNumber evidence="1">2.7.1.148</ecNumber>
    </recommendedName>
    <alternativeName>
        <fullName evidence="1">4-(cytidine-5'-diphospho)-2-C-methyl-D-erythritol kinase</fullName>
    </alternativeName>
</protein>
<reference key="1">
    <citation type="submission" date="2007-08" db="EMBL/GenBank/DDBJ databases">
        <authorList>
            <consortium name="The Citrobacter koseri Genome Sequencing Project"/>
            <person name="McClelland M."/>
            <person name="Sanderson E.K."/>
            <person name="Porwollik S."/>
            <person name="Spieth J."/>
            <person name="Clifton W.S."/>
            <person name="Latreille P."/>
            <person name="Courtney L."/>
            <person name="Wang C."/>
            <person name="Pepin K."/>
            <person name="Bhonagiri V."/>
            <person name="Nash W."/>
            <person name="Johnson M."/>
            <person name="Thiruvilangam P."/>
            <person name="Wilson R."/>
        </authorList>
    </citation>
    <scope>NUCLEOTIDE SEQUENCE [LARGE SCALE GENOMIC DNA]</scope>
    <source>
        <strain>ATCC BAA-895 / CDC 4225-83 / SGSC4696</strain>
    </source>
</reference>
<organism>
    <name type="scientific">Citrobacter koseri (strain ATCC BAA-895 / CDC 4225-83 / SGSC4696)</name>
    <dbReference type="NCBI Taxonomy" id="290338"/>
    <lineage>
        <taxon>Bacteria</taxon>
        <taxon>Pseudomonadati</taxon>
        <taxon>Pseudomonadota</taxon>
        <taxon>Gammaproteobacteria</taxon>
        <taxon>Enterobacterales</taxon>
        <taxon>Enterobacteriaceae</taxon>
        <taxon>Citrobacter</taxon>
    </lineage>
</organism>
<evidence type="ECO:0000255" key="1">
    <source>
        <dbReference type="HAMAP-Rule" id="MF_00061"/>
    </source>
</evidence>
<feature type="chain" id="PRO_1000057417" description="4-diphosphocytidyl-2-C-methyl-D-erythritol kinase">
    <location>
        <begin position="1"/>
        <end position="283"/>
    </location>
</feature>
<feature type="active site" evidence="1">
    <location>
        <position position="10"/>
    </location>
</feature>
<feature type="active site" evidence="1">
    <location>
        <position position="141"/>
    </location>
</feature>
<feature type="binding site" evidence="1">
    <location>
        <begin position="99"/>
        <end position="109"/>
    </location>
    <ligand>
        <name>ATP</name>
        <dbReference type="ChEBI" id="CHEBI:30616"/>
    </ligand>
</feature>
<dbReference type="EC" id="2.7.1.148" evidence="1"/>
<dbReference type="EMBL" id="CP000822">
    <property type="protein sequence ID" value="ABV12412.1"/>
    <property type="molecule type" value="Genomic_DNA"/>
</dbReference>
<dbReference type="RefSeq" id="WP_012132155.1">
    <property type="nucleotide sequence ID" value="NC_009792.1"/>
</dbReference>
<dbReference type="SMR" id="A8AFZ9"/>
<dbReference type="STRING" id="290338.CKO_01272"/>
<dbReference type="GeneID" id="45135388"/>
<dbReference type="KEGG" id="cko:CKO_01272"/>
<dbReference type="HOGENOM" id="CLU_053057_3_0_6"/>
<dbReference type="OrthoDB" id="9809438at2"/>
<dbReference type="UniPathway" id="UPA00056">
    <property type="reaction ID" value="UER00094"/>
</dbReference>
<dbReference type="Proteomes" id="UP000008148">
    <property type="component" value="Chromosome"/>
</dbReference>
<dbReference type="GO" id="GO:0050515">
    <property type="term" value="F:4-(cytidine 5'-diphospho)-2-C-methyl-D-erythritol kinase activity"/>
    <property type="evidence" value="ECO:0007669"/>
    <property type="project" value="UniProtKB-UniRule"/>
</dbReference>
<dbReference type="GO" id="GO:0005524">
    <property type="term" value="F:ATP binding"/>
    <property type="evidence" value="ECO:0007669"/>
    <property type="project" value="UniProtKB-UniRule"/>
</dbReference>
<dbReference type="GO" id="GO:0019288">
    <property type="term" value="P:isopentenyl diphosphate biosynthetic process, methylerythritol 4-phosphate pathway"/>
    <property type="evidence" value="ECO:0007669"/>
    <property type="project" value="UniProtKB-UniRule"/>
</dbReference>
<dbReference type="GO" id="GO:0016114">
    <property type="term" value="P:terpenoid biosynthetic process"/>
    <property type="evidence" value="ECO:0007669"/>
    <property type="project" value="InterPro"/>
</dbReference>
<dbReference type="FunFam" id="3.30.230.10:FF:000022">
    <property type="entry name" value="4-diphosphocytidyl-2-C-methyl-D-erythritol kinase"/>
    <property type="match status" value="1"/>
</dbReference>
<dbReference type="FunFam" id="3.30.70.890:FF:000004">
    <property type="entry name" value="4-diphosphocytidyl-2-C-methyl-D-erythritol kinase"/>
    <property type="match status" value="1"/>
</dbReference>
<dbReference type="Gene3D" id="3.30.230.10">
    <property type="match status" value="1"/>
</dbReference>
<dbReference type="Gene3D" id="3.30.70.890">
    <property type="entry name" value="GHMP kinase, C-terminal domain"/>
    <property type="match status" value="1"/>
</dbReference>
<dbReference type="HAMAP" id="MF_00061">
    <property type="entry name" value="IspE"/>
    <property type="match status" value="1"/>
</dbReference>
<dbReference type="InterPro" id="IPR013750">
    <property type="entry name" value="GHMP_kinase_C_dom"/>
</dbReference>
<dbReference type="InterPro" id="IPR036554">
    <property type="entry name" value="GHMP_kinase_C_sf"/>
</dbReference>
<dbReference type="InterPro" id="IPR006204">
    <property type="entry name" value="GHMP_kinase_N_dom"/>
</dbReference>
<dbReference type="InterPro" id="IPR004424">
    <property type="entry name" value="IspE"/>
</dbReference>
<dbReference type="InterPro" id="IPR020568">
    <property type="entry name" value="Ribosomal_Su5_D2-typ_SF"/>
</dbReference>
<dbReference type="InterPro" id="IPR014721">
    <property type="entry name" value="Ribsml_uS5_D2-typ_fold_subgr"/>
</dbReference>
<dbReference type="NCBIfam" id="TIGR00154">
    <property type="entry name" value="ispE"/>
    <property type="match status" value="1"/>
</dbReference>
<dbReference type="PANTHER" id="PTHR43527">
    <property type="entry name" value="4-DIPHOSPHOCYTIDYL-2-C-METHYL-D-ERYTHRITOL KINASE, CHLOROPLASTIC"/>
    <property type="match status" value="1"/>
</dbReference>
<dbReference type="PANTHER" id="PTHR43527:SF2">
    <property type="entry name" value="4-DIPHOSPHOCYTIDYL-2-C-METHYL-D-ERYTHRITOL KINASE, CHLOROPLASTIC"/>
    <property type="match status" value="1"/>
</dbReference>
<dbReference type="Pfam" id="PF08544">
    <property type="entry name" value="GHMP_kinases_C"/>
    <property type="match status" value="1"/>
</dbReference>
<dbReference type="Pfam" id="PF00288">
    <property type="entry name" value="GHMP_kinases_N"/>
    <property type="match status" value="1"/>
</dbReference>
<dbReference type="PIRSF" id="PIRSF010376">
    <property type="entry name" value="IspE"/>
    <property type="match status" value="1"/>
</dbReference>
<dbReference type="SUPFAM" id="SSF55060">
    <property type="entry name" value="GHMP Kinase, C-terminal domain"/>
    <property type="match status" value="1"/>
</dbReference>
<dbReference type="SUPFAM" id="SSF54211">
    <property type="entry name" value="Ribosomal protein S5 domain 2-like"/>
    <property type="match status" value="1"/>
</dbReference>
<comment type="function">
    <text evidence="1">Catalyzes the phosphorylation of the position 2 hydroxy group of 4-diphosphocytidyl-2C-methyl-D-erythritol.</text>
</comment>
<comment type="catalytic activity">
    <reaction evidence="1">
        <text>4-CDP-2-C-methyl-D-erythritol + ATP = 4-CDP-2-C-methyl-D-erythritol 2-phosphate + ADP + H(+)</text>
        <dbReference type="Rhea" id="RHEA:18437"/>
        <dbReference type="ChEBI" id="CHEBI:15378"/>
        <dbReference type="ChEBI" id="CHEBI:30616"/>
        <dbReference type="ChEBI" id="CHEBI:57823"/>
        <dbReference type="ChEBI" id="CHEBI:57919"/>
        <dbReference type="ChEBI" id="CHEBI:456216"/>
        <dbReference type="EC" id="2.7.1.148"/>
    </reaction>
</comment>
<comment type="pathway">
    <text evidence="1">Isoprenoid biosynthesis; isopentenyl diphosphate biosynthesis via DXP pathway; isopentenyl diphosphate from 1-deoxy-D-xylulose 5-phosphate: step 3/6.</text>
</comment>
<comment type="subunit">
    <text evidence="1">Homodimer.</text>
</comment>
<comment type="similarity">
    <text evidence="1">Belongs to the GHMP kinase family. IspE subfamily.</text>
</comment>